<protein>
    <recommendedName>
        <fullName evidence="1">dTTP/UTP pyrophosphatase</fullName>
        <shortName evidence="1">dTTPase/UTPase</shortName>
        <ecNumber evidence="1">3.6.1.9</ecNumber>
    </recommendedName>
    <alternativeName>
        <fullName evidence="1">Nucleoside triphosphate pyrophosphatase</fullName>
    </alternativeName>
    <alternativeName>
        <fullName evidence="1">Nucleotide pyrophosphatase</fullName>
        <shortName evidence="1">Nucleotide PPase</shortName>
    </alternativeName>
</protein>
<reference key="1">
    <citation type="journal article" date="2001" name="Science">
        <title>The genome of the natural genetic engineer Agrobacterium tumefaciens C58.</title>
        <authorList>
            <person name="Wood D.W."/>
            <person name="Setubal J.C."/>
            <person name="Kaul R."/>
            <person name="Monks D.E."/>
            <person name="Kitajima J.P."/>
            <person name="Okura V.K."/>
            <person name="Zhou Y."/>
            <person name="Chen L."/>
            <person name="Wood G.E."/>
            <person name="Almeida N.F. Jr."/>
            <person name="Woo L."/>
            <person name="Chen Y."/>
            <person name="Paulsen I.T."/>
            <person name="Eisen J.A."/>
            <person name="Karp P.D."/>
            <person name="Bovee D. Sr."/>
            <person name="Chapman P."/>
            <person name="Clendenning J."/>
            <person name="Deatherage G."/>
            <person name="Gillet W."/>
            <person name="Grant C."/>
            <person name="Kutyavin T."/>
            <person name="Levy R."/>
            <person name="Li M.-J."/>
            <person name="McClelland E."/>
            <person name="Palmieri A."/>
            <person name="Raymond C."/>
            <person name="Rouse G."/>
            <person name="Saenphimmachak C."/>
            <person name="Wu Z."/>
            <person name="Romero P."/>
            <person name="Gordon D."/>
            <person name="Zhang S."/>
            <person name="Yoo H."/>
            <person name="Tao Y."/>
            <person name="Biddle P."/>
            <person name="Jung M."/>
            <person name="Krespan W."/>
            <person name="Perry M."/>
            <person name="Gordon-Kamm B."/>
            <person name="Liao L."/>
            <person name="Kim S."/>
            <person name="Hendrick C."/>
            <person name="Zhao Z.-Y."/>
            <person name="Dolan M."/>
            <person name="Chumley F."/>
            <person name="Tingey S.V."/>
            <person name="Tomb J.-F."/>
            <person name="Gordon M.P."/>
            <person name="Olson M.V."/>
            <person name="Nester E.W."/>
        </authorList>
    </citation>
    <scope>NUCLEOTIDE SEQUENCE [LARGE SCALE GENOMIC DNA]</scope>
    <source>
        <strain>C58 / ATCC 33970</strain>
    </source>
</reference>
<reference key="2">
    <citation type="journal article" date="2001" name="Science">
        <title>Genome sequence of the plant pathogen and biotechnology agent Agrobacterium tumefaciens C58.</title>
        <authorList>
            <person name="Goodner B."/>
            <person name="Hinkle G."/>
            <person name="Gattung S."/>
            <person name="Miller N."/>
            <person name="Blanchard M."/>
            <person name="Qurollo B."/>
            <person name="Goldman B.S."/>
            <person name="Cao Y."/>
            <person name="Askenazi M."/>
            <person name="Halling C."/>
            <person name="Mullin L."/>
            <person name="Houmiel K."/>
            <person name="Gordon J."/>
            <person name="Vaudin M."/>
            <person name="Iartchouk O."/>
            <person name="Epp A."/>
            <person name="Liu F."/>
            <person name="Wollam C."/>
            <person name="Allinger M."/>
            <person name="Doughty D."/>
            <person name="Scott C."/>
            <person name="Lappas C."/>
            <person name="Markelz B."/>
            <person name="Flanagan C."/>
            <person name="Crowell C."/>
            <person name="Gurson J."/>
            <person name="Lomo C."/>
            <person name="Sear C."/>
            <person name="Strub G."/>
            <person name="Cielo C."/>
            <person name="Slater S."/>
        </authorList>
    </citation>
    <scope>NUCLEOTIDE SEQUENCE [LARGE SCALE GENOMIC DNA]</scope>
    <source>
        <strain>C58 / ATCC 33970</strain>
    </source>
</reference>
<comment type="function">
    <text evidence="1">Nucleoside triphosphate pyrophosphatase that hydrolyzes dTTP and UTP. May have a dual role in cell division arrest and in preventing the incorporation of modified nucleotides into cellular nucleic acids.</text>
</comment>
<comment type="catalytic activity">
    <reaction evidence="1">
        <text>dTTP + H2O = dTMP + diphosphate + H(+)</text>
        <dbReference type="Rhea" id="RHEA:28534"/>
        <dbReference type="ChEBI" id="CHEBI:15377"/>
        <dbReference type="ChEBI" id="CHEBI:15378"/>
        <dbReference type="ChEBI" id="CHEBI:33019"/>
        <dbReference type="ChEBI" id="CHEBI:37568"/>
        <dbReference type="ChEBI" id="CHEBI:63528"/>
        <dbReference type="EC" id="3.6.1.9"/>
    </reaction>
</comment>
<comment type="catalytic activity">
    <reaction evidence="1">
        <text>UTP + H2O = UMP + diphosphate + H(+)</text>
        <dbReference type="Rhea" id="RHEA:29395"/>
        <dbReference type="ChEBI" id="CHEBI:15377"/>
        <dbReference type="ChEBI" id="CHEBI:15378"/>
        <dbReference type="ChEBI" id="CHEBI:33019"/>
        <dbReference type="ChEBI" id="CHEBI:46398"/>
        <dbReference type="ChEBI" id="CHEBI:57865"/>
        <dbReference type="EC" id="3.6.1.9"/>
    </reaction>
</comment>
<comment type="cofactor">
    <cofactor evidence="1">
        <name>a divalent metal cation</name>
        <dbReference type="ChEBI" id="CHEBI:60240"/>
    </cofactor>
</comment>
<comment type="subcellular location">
    <subcellularLocation>
        <location evidence="1">Cytoplasm</location>
    </subcellularLocation>
</comment>
<comment type="similarity">
    <text evidence="1">Belongs to the Maf family. YhdE subfamily.</text>
</comment>
<keyword id="KW-0963">Cytoplasm</keyword>
<keyword id="KW-0378">Hydrolase</keyword>
<keyword id="KW-0546">Nucleotide metabolism</keyword>
<keyword id="KW-1185">Reference proteome</keyword>
<organism>
    <name type="scientific">Agrobacterium fabrum (strain C58 / ATCC 33970)</name>
    <name type="common">Agrobacterium tumefaciens (strain C58)</name>
    <dbReference type="NCBI Taxonomy" id="176299"/>
    <lineage>
        <taxon>Bacteria</taxon>
        <taxon>Pseudomonadati</taxon>
        <taxon>Pseudomonadota</taxon>
        <taxon>Alphaproteobacteria</taxon>
        <taxon>Hyphomicrobiales</taxon>
        <taxon>Rhizobiaceae</taxon>
        <taxon>Rhizobium/Agrobacterium group</taxon>
        <taxon>Agrobacterium</taxon>
        <taxon>Agrobacterium tumefaciens complex</taxon>
    </lineage>
</organism>
<gene>
    <name type="primary">maf1</name>
    <name type="ordered locus">Atu0533</name>
    <name type="ORF">AGR_C_943</name>
</gene>
<proteinExistence type="inferred from homology"/>
<evidence type="ECO:0000255" key="1">
    <source>
        <dbReference type="HAMAP-Rule" id="MF_00528"/>
    </source>
</evidence>
<dbReference type="EC" id="3.6.1.9" evidence="1"/>
<dbReference type="EMBL" id="AE007869">
    <property type="protein sequence ID" value="AAK86347.1"/>
    <property type="molecule type" value="Genomic_DNA"/>
</dbReference>
<dbReference type="PIR" id="AI2641">
    <property type="entry name" value="AI2641"/>
</dbReference>
<dbReference type="PIR" id="B97424">
    <property type="entry name" value="B97424"/>
</dbReference>
<dbReference type="RefSeq" id="NP_353562.1">
    <property type="nucleotide sequence ID" value="NC_003062.2"/>
</dbReference>
<dbReference type="RefSeq" id="WP_010970963.1">
    <property type="nucleotide sequence ID" value="NC_003062.2"/>
</dbReference>
<dbReference type="SMR" id="Q8UHX5"/>
<dbReference type="STRING" id="176299.Atu0533"/>
<dbReference type="EnsemblBacteria" id="AAK86347">
    <property type="protein sequence ID" value="AAK86347"/>
    <property type="gene ID" value="Atu0533"/>
</dbReference>
<dbReference type="GeneID" id="1132571"/>
<dbReference type="KEGG" id="atu:Atu0533"/>
<dbReference type="PATRIC" id="fig|176299.10.peg.531"/>
<dbReference type="eggNOG" id="COG0424">
    <property type="taxonomic scope" value="Bacteria"/>
</dbReference>
<dbReference type="HOGENOM" id="CLU_040416_2_0_5"/>
<dbReference type="OrthoDB" id="9807767at2"/>
<dbReference type="PhylomeDB" id="Q8UHX5"/>
<dbReference type="BioCyc" id="AGRO:ATU0533-MONOMER"/>
<dbReference type="Proteomes" id="UP000000813">
    <property type="component" value="Chromosome circular"/>
</dbReference>
<dbReference type="GO" id="GO:0005737">
    <property type="term" value="C:cytoplasm"/>
    <property type="evidence" value="ECO:0007669"/>
    <property type="project" value="UniProtKB-SubCell"/>
</dbReference>
<dbReference type="GO" id="GO:0036218">
    <property type="term" value="F:dTTP diphosphatase activity"/>
    <property type="evidence" value="ECO:0007669"/>
    <property type="project" value="RHEA"/>
</dbReference>
<dbReference type="GO" id="GO:0036221">
    <property type="term" value="F:UTP diphosphatase activity"/>
    <property type="evidence" value="ECO:0007669"/>
    <property type="project" value="RHEA"/>
</dbReference>
<dbReference type="GO" id="GO:0009117">
    <property type="term" value="P:nucleotide metabolic process"/>
    <property type="evidence" value="ECO:0007669"/>
    <property type="project" value="UniProtKB-KW"/>
</dbReference>
<dbReference type="CDD" id="cd00555">
    <property type="entry name" value="Maf"/>
    <property type="match status" value="1"/>
</dbReference>
<dbReference type="FunFam" id="3.90.950.10:FF:000005">
    <property type="entry name" value="7-methyl-GTP pyrophosphatase"/>
    <property type="match status" value="1"/>
</dbReference>
<dbReference type="Gene3D" id="3.90.950.10">
    <property type="match status" value="1"/>
</dbReference>
<dbReference type="HAMAP" id="MF_00528">
    <property type="entry name" value="Maf"/>
    <property type="match status" value="1"/>
</dbReference>
<dbReference type="InterPro" id="IPR029001">
    <property type="entry name" value="ITPase-like_fam"/>
</dbReference>
<dbReference type="InterPro" id="IPR003697">
    <property type="entry name" value="Maf-like"/>
</dbReference>
<dbReference type="NCBIfam" id="TIGR00172">
    <property type="entry name" value="maf"/>
    <property type="match status" value="1"/>
</dbReference>
<dbReference type="NCBIfam" id="NF002401">
    <property type="entry name" value="PRK01441.1"/>
    <property type="match status" value="1"/>
</dbReference>
<dbReference type="PANTHER" id="PTHR43213">
    <property type="entry name" value="BIFUNCTIONAL DTTP/UTP PYROPHOSPHATASE/METHYLTRANSFERASE PROTEIN-RELATED"/>
    <property type="match status" value="1"/>
</dbReference>
<dbReference type="PANTHER" id="PTHR43213:SF5">
    <property type="entry name" value="BIFUNCTIONAL DTTP_UTP PYROPHOSPHATASE_METHYLTRANSFERASE PROTEIN-RELATED"/>
    <property type="match status" value="1"/>
</dbReference>
<dbReference type="Pfam" id="PF02545">
    <property type="entry name" value="Maf"/>
    <property type="match status" value="1"/>
</dbReference>
<dbReference type="PIRSF" id="PIRSF006305">
    <property type="entry name" value="Maf"/>
    <property type="match status" value="1"/>
</dbReference>
<dbReference type="SUPFAM" id="SSF52972">
    <property type="entry name" value="ITPase-like"/>
    <property type="match status" value="1"/>
</dbReference>
<accession>Q8UHX5</accession>
<sequence>MTNSKQKLVLASGSPRRLELLHQIGIEPARLMPMDIDETPVKLEHPRTLCRRLSQQKAEAAQAALKSEQAWKDAYVLGSDTVVAVGRRIVGKAEYTEEASAALHLLSGRSHWVYTGICLVTPDGKIRQKVAETKVRFKRLSTREIDAYIASGQWRGKAGAYGIQGIAGAFVQKLTGSYTNVVGLPLYETMSLLSGEGFEVTSGWLEG</sequence>
<name>NTPPA_AGRFC</name>
<feature type="chain" id="PRO_0000122987" description="dTTP/UTP pyrophosphatase">
    <location>
        <begin position="1"/>
        <end position="207"/>
    </location>
</feature>
<feature type="active site" description="Proton acceptor" evidence="1">
    <location>
        <position position="80"/>
    </location>
</feature>
<feature type="site" description="Important for substrate specificity" evidence="1">
    <location>
        <position position="16"/>
    </location>
</feature>
<feature type="site" description="Important for substrate specificity" evidence="1">
    <location>
        <position position="81"/>
    </location>
</feature>
<feature type="site" description="Important for substrate specificity" evidence="1">
    <location>
        <position position="164"/>
    </location>
</feature>